<sequence length="489" mass="54063">MTFRNCVAVDLGASSGRVMLARYERECRSLTLREIHRFKNGLHSQNGYVTWDVDSLESAIRLGLNKVCEEGIRIDSIGIDTWGVDFVLLDLQGKRVGLPVAYRDSRTNGLMTQAQQQLGKRDIYQRSGIQFLPFNTLYQLRALTEQQPELIPHIAHALLMPDYFSYRLTGKMNWEYTNATTTQLVNINSDDWDESLLAWSGANKAWFGHPTHPGNVIGHWICPQGNEIPVVAVASHDTASAVIASPLNGSRAAYLSSGTWSLMGFESQTPFTNDTALAANITNEGGAEGRYRVLKNIMGLWLLQRVLQERQINDLPALIAATQALPACRFTINPNDDRFINPDEMCSEIQAACRETAQPIPESDAELARCIFDSLALLYADVLHELAQLRGEDFSQLHIVGGGCQNALLNQLCADACGIRVIAGPVEASTLGNIGIQLMTLDELNNVDDFRQVVSTTANLTTFTPNPDSEIAHYVAQIHSTRQTKELCA</sequence>
<organism>
    <name type="scientific">Escherichia coli O7:K1 (strain IAI39 / ExPEC)</name>
    <dbReference type="NCBI Taxonomy" id="585057"/>
    <lineage>
        <taxon>Bacteria</taxon>
        <taxon>Pseudomonadati</taxon>
        <taxon>Pseudomonadota</taxon>
        <taxon>Gammaproteobacteria</taxon>
        <taxon>Enterobacterales</taxon>
        <taxon>Enterobacteriaceae</taxon>
        <taxon>Escherichia</taxon>
    </lineage>
</organism>
<protein>
    <recommendedName>
        <fullName evidence="1">Rhamnulokinase</fullName>
        <shortName evidence="1">RhaB</shortName>
        <ecNumber evidence="1">2.7.1.5</ecNumber>
    </recommendedName>
    <alternativeName>
        <fullName evidence="1">ATP:L-rhamnulose phosphotransferase</fullName>
    </alternativeName>
    <alternativeName>
        <fullName evidence="1">L-rhamnulose 1-kinase</fullName>
    </alternativeName>
    <alternativeName>
        <fullName evidence="1">Rhamnulose kinase</fullName>
    </alternativeName>
</protein>
<accession>B7NUA2</accession>
<proteinExistence type="inferred from homology"/>
<gene>
    <name evidence="1" type="primary">rhaB</name>
    <name type="ordered locus">ECIAI39_3091</name>
</gene>
<dbReference type="EC" id="2.7.1.5" evidence="1"/>
<dbReference type="EMBL" id="CU928164">
    <property type="protein sequence ID" value="CAR19210.1"/>
    <property type="molecule type" value="Genomic_DNA"/>
</dbReference>
<dbReference type="RefSeq" id="WP_000144041.1">
    <property type="nucleotide sequence ID" value="NC_011750.1"/>
</dbReference>
<dbReference type="RefSeq" id="YP_002409021.1">
    <property type="nucleotide sequence ID" value="NC_011750.1"/>
</dbReference>
<dbReference type="SMR" id="B7NUA2"/>
<dbReference type="STRING" id="585057.ECIAI39_3091"/>
<dbReference type="KEGG" id="ect:ECIAI39_3091"/>
<dbReference type="PATRIC" id="fig|585057.6.peg.3206"/>
<dbReference type="HOGENOM" id="CLU_039395_0_0_6"/>
<dbReference type="UniPathway" id="UPA00541">
    <property type="reaction ID" value="UER00602"/>
</dbReference>
<dbReference type="Proteomes" id="UP000000749">
    <property type="component" value="Chromosome"/>
</dbReference>
<dbReference type="GO" id="GO:0005829">
    <property type="term" value="C:cytosol"/>
    <property type="evidence" value="ECO:0007669"/>
    <property type="project" value="TreeGrafter"/>
</dbReference>
<dbReference type="GO" id="GO:0005524">
    <property type="term" value="F:ATP binding"/>
    <property type="evidence" value="ECO:0007669"/>
    <property type="project" value="UniProtKB-KW"/>
</dbReference>
<dbReference type="GO" id="GO:0004370">
    <property type="term" value="F:glycerol kinase activity"/>
    <property type="evidence" value="ECO:0007669"/>
    <property type="project" value="TreeGrafter"/>
</dbReference>
<dbReference type="GO" id="GO:0008993">
    <property type="term" value="F:rhamnulokinase activity"/>
    <property type="evidence" value="ECO:0007669"/>
    <property type="project" value="UniProtKB-UniRule"/>
</dbReference>
<dbReference type="GO" id="GO:0006071">
    <property type="term" value="P:glycerol metabolic process"/>
    <property type="evidence" value="ECO:0007669"/>
    <property type="project" value="TreeGrafter"/>
</dbReference>
<dbReference type="GO" id="GO:0019301">
    <property type="term" value="P:rhamnose catabolic process"/>
    <property type="evidence" value="ECO:0007669"/>
    <property type="project" value="UniProtKB-UniRule"/>
</dbReference>
<dbReference type="CDD" id="cd07771">
    <property type="entry name" value="ASKHA_NBD_FGGY_RhaB-like"/>
    <property type="match status" value="1"/>
</dbReference>
<dbReference type="FunFam" id="3.30.420.40:FF:000064">
    <property type="entry name" value="Rhamnulokinase"/>
    <property type="match status" value="1"/>
</dbReference>
<dbReference type="FunFam" id="3.30.420.40:FF:000073">
    <property type="entry name" value="Rhamnulokinase"/>
    <property type="match status" value="1"/>
</dbReference>
<dbReference type="Gene3D" id="3.30.420.40">
    <property type="match status" value="2"/>
</dbReference>
<dbReference type="HAMAP" id="MF_01535">
    <property type="entry name" value="Rhamnulokinase"/>
    <property type="match status" value="1"/>
</dbReference>
<dbReference type="InterPro" id="IPR043129">
    <property type="entry name" value="ATPase_NBD"/>
</dbReference>
<dbReference type="InterPro" id="IPR018485">
    <property type="entry name" value="FGGY_C"/>
</dbReference>
<dbReference type="InterPro" id="IPR018484">
    <property type="entry name" value="FGGY_N"/>
</dbReference>
<dbReference type="InterPro" id="IPR013449">
    <property type="entry name" value="Rhamnulokinase"/>
</dbReference>
<dbReference type="NCBIfam" id="NF007925">
    <property type="entry name" value="PRK10640.1"/>
    <property type="match status" value="1"/>
</dbReference>
<dbReference type="NCBIfam" id="TIGR02627">
    <property type="entry name" value="rhamnulo_kin"/>
    <property type="match status" value="1"/>
</dbReference>
<dbReference type="PANTHER" id="PTHR10196:SF93">
    <property type="entry name" value="L-RHAMNULOKINASE"/>
    <property type="match status" value="1"/>
</dbReference>
<dbReference type="PANTHER" id="PTHR10196">
    <property type="entry name" value="SUGAR KINASE"/>
    <property type="match status" value="1"/>
</dbReference>
<dbReference type="Pfam" id="PF02782">
    <property type="entry name" value="FGGY_C"/>
    <property type="match status" value="1"/>
</dbReference>
<dbReference type="Pfam" id="PF00370">
    <property type="entry name" value="FGGY_N"/>
    <property type="match status" value="1"/>
</dbReference>
<dbReference type="SUPFAM" id="SSF53067">
    <property type="entry name" value="Actin-like ATPase domain"/>
    <property type="match status" value="2"/>
</dbReference>
<name>RHAB_ECO7I</name>
<keyword id="KW-0067">ATP-binding</keyword>
<keyword id="KW-1015">Disulfide bond</keyword>
<keyword id="KW-0418">Kinase</keyword>
<keyword id="KW-0460">Magnesium</keyword>
<keyword id="KW-0547">Nucleotide-binding</keyword>
<keyword id="KW-0684">Rhamnose metabolism</keyword>
<keyword id="KW-0808">Transferase</keyword>
<feature type="chain" id="PRO_1000146540" description="Rhamnulokinase">
    <location>
        <begin position="1"/>
        <end position="489"/>
    </location>
</feature>
<feature type="active site" description="Proton acceptor" evidence="1">
    <location>
        <position position="237"/>
    </location>
</feature>
<feature type="binding site" evidence="1">
    <location>
        <begin position="13"/>
        <end position="17"/>
    </location>
    <ligand>
        <name>ATP</name>
        <dbReference type="ChEBI" id="CHEBI:30616"/>
    </ligand>
</feature>
<feature type="binding site" evidence="1">
    <location>
        <position position="83"/>
    </location>
    <ligand>
        <name>substrate</name>
    </ligand>
</feature>
<feature type="binding site" evidence="1">
    <location>
        <begin position="236"/>
        <end position="238"/>
    </location>
    <ligand>
        <name>substrate</name>
    </ligand>
</feature>
<feature type="binding site" evidence="1">
    <location>
        <position position="259"/>
    </location>
    <ligand>
        <name>ATP</name>
        <dbReference type="ChEBI" id="CHEBI:30616"/>
    </ligand>
</feature>
<feature type="binding site" evidence="1">
    <location>
        <position position="296"/>
    </location>
    <ligand>
        <name>substrate</name>
    </ligand>
</feature>
<feature type="binding site" evidence="1">
    <location>
        <position position="304"/>
    </location>
    <ligand>
        <name>ATP</name>
        <dbReference type="ChEBI" id="CHEBI:30616"/>
    </ligand>
</feature>
<feature type="binding site" evidence="1">
    <location>
        <position position="402"/>
    </location>
    <ligand>
        <name>ATP</name>
        <dbReference type="ChEBI" id="CHEBI:30616"/>
    </ligand>
</feature>
<feature type="disulfide bond" evidence="1">
    <location>
        <begin position="68"/>
        <end position="222"/>
    </location>
</feature>
<feature type="disulfide bond" evidence="1">
    <location>
        <begin position="353"/>
        <end position="370"/>
    </location>
</feature>
<feature type="disulfide bond" evidence="1">
    <location>
        <begin position="413"/>
        <end position="417"/>
    </location>
</feature>
<comment type="function">
    <text evidence="1">Involved in the catabolism of L-rhamnose (6-deoxy-L-mannose). Catalyzes the transfer of the gamma-phosphate group from ATP to the 1-hydroxyl group of L-rhamnulose to yield L-rhamnulose 1-phosphate.</text>
</comment>
<comment type="catalytic activity">
    <reaction evidence="1">
        <text>L-rhamnulose + ATP = L-rhamnulose 1-phosphate + ADP + H(+)</text>
        <dbReference type="Rhea" id="RHEA:20117"/>
        <dbReference type="ChEBI" id="CHEBI:15378"/>
        <dbReference type="ChEBI" id="CHEBI:17897"/>
        <dbReference type="ChEBI" id="CHEBI:30616"/>
        <dbReference type="ChEBI" id="CHEBI:58313"/>
        <dbReference type="ChEBI" id="CHEBI:456216"/>
        <dbReference type="EC" id="2.7.1.5"/>
    </reaction>
</comment>
<comment type="cofactor">
    <cofactor evidence="1">
        <name>Mg(2+)</name>
        <dbReference type="ChEBI" id="CHEBI:18420"/>
    </cofactor>
</comment>
<comment type="pathway">
    <text evidence="1">Carbohydrate degradation; L-rhamnose degradation; glycerone phosphate from L-rhamnose: step 2/3.</text>
</comment>
<comment type="subunit">
    <text evidence="1">Monomer.</text>
</comment>
<comment type="similarity">
    <text evidence="1">Belongs to the rhamnulokinase family.</text>
</comment>
<reference key="1">
    <citation type="journal article" date="2009" name="PLoS Genet.">
        <title>Organised genome dynamics in the Escherichia coli species results in highly diverse adaptive paths.</title>
        <authorList>
            <person name="Touchon M."/>
            <person name="Hoede C."/>
            <person name="Tenaillon O."/>
            <person name="Barbe V."/>
            <person name="Baeriswyl S."/>
            <person name="Bidet P."/>
            <person name="Bingen E."/>
            <person name="Bonacorsi S."/>
            <person name="Bouchier C."/>
            <person name="Bouvet O."/>
            <person name="Calteau A."/>
            <person name="Chiapello H."/>
            <person name="Clermont O."/>
            <person name="Cruveiller S."/>
            <person name="Danchin A."/>
            <person name="Diard M."/>
            <person name="Dossat C."/>
            <person name="Karoui M.E."/>
            <person name="Frapy E."/>
            <person name="Garry L."/>
            <person name="Ghigo J.M."/>
            <person name="Gilles A.M."/>
            <person name="Johnson J."/>
            <person name="Le Bouguenec C."/>
            <person name="Lescat M."/>
            <person name="Mangenot S."/>
            <person name="Martinez-Jehanne V."/>
            <person name="Matic I."/>
            <person name="Nassif X."/>
            <person name="Oztas S."/>
            <person name="Petit M.A."/>
            <person name="Pichon C."/>
            <person name="Rouy Z."/>
            <person name="Ruf C.S."/>
            <person name="Schneider D."/>
            <person name="Tourret J."/>
            <person name="Vacherie B."/>
            <person name="Vallenet D."/>
            <person name="Medigue C."/>
            <person name="Rocha E.P.C."/>
            <person name="Denamur E."/>
        </authorList>
    </citation>
    <scope>NUCLEOTIDE SEQUENCE [LARGE SCALE GENOMIC DNA]</scope>
    <source>
        <strain>IAI39 / ExPEC</strain>
    </source>
</reference>
<evidence type="ECO:0000255" key="1">
    <source>
        <dbReference type="HAMAP-Rule" id="MF_01535"/>
    </source>
</evidence>